<sequence length="249" mass="28681">MKLNISFPATGCQKLIEVDDERKLRTFYEKRMATEVAADALGEEWKGYVVRISGGNDKQGFPMKQGVLTHGRVRLLLSKGHSCYRPRRTGERKRKSVRGCIVDANLSVLNLVIVKKGEKDIPGLTDTTVPRRLGPKRASRIRKLFNLSKEDDVRQYVVRKPLNKEGKKPRTKAPKIQRLVTPRVLQHKRRRIALKKQRTKKNKEEAAEYAKLLAKRMKEAKEKRQEQIAKRRRLSSLRASTSKSESSQK</sequence>
<comment type="function">
    <text evidence="1">Component of the 40S small ribosomal subunit. Plays an important role in controlling cell growth and proliferation through the selective translation of particular classes of mRNA. Part of the small subunit (SSU) processome, first precursor of the small eukaryotic ribosomal subunit. During the assembly of the SSU processome in the nucleolus, many ribosome biogenesis factors, an RNA chaperone and ribosomal proteins associate with the nascent pre-rRNA and work in concert to generate RNA folding, modifications, rearrangements and cleavage as well as targeted degradation of pre-ribosomal RNA by the RNA exosome.</text>
</comment>
<comment type="subunit">
    <text evidence="1">Component of the small ribosomal subunit. Part of the small subunit (SSU) processome, composed of more than 70 proteins and the RNA chaperone small nucleolar RNA (snoRNA) U3.</text>
</comment>
<comment type="subcellular location">
    <subcellularLocation>
        <location evidence="1">Cytoplasm</location>
    </subcellularLocation>
    <subcellularLocation>
        <location evidence="1">Nucleus</location>
        <location evidence="1">Nucleolus</location>
    </subcellularLocation>
</comment>
<comment type="PTM">
    <text evidence="1">Ribosomal protein S6 is the major substrate of protein kinases in eukaryote ribosomes. The phosphorylation is stimulated by growth factors, tumor promoting agents, and mitogens. It is dephosphorylated at growth arrest. Phosphorylated at Ser-235 and Ser-236 by RPS6KA1 and RPS6KA3; phosphorylation at these sites facilitates the assembly of the pre-initiation complex.</text>
</comment>
<comment type="PTM">
    <text evidence="1">Specifically hydroxylated (with R stereochemistry) at C-3 of Arg-137 by KDM8.</text>
</comment>
<comment type="PTM">
    <text evidence="1">Mono-ADP-ribosylation at Glu-35 by PARP16 inhibits polysome assembly and mRNA loading, thereby inhibiting protein translation.</text>
</comment>
<comment type="similarity">
    <text evidence="3">Belongs to the eukaryotic ribosomal protein eS6 family.</text>
</comment>
<reference key="1">
    <citation type="journal article" date="1988" name="J. Biol. Chem.">
        <title>The primary structure of rat ribosomal protein S6.</title>
        <authorList>
            <person name="Chan Y.-L."/>
            <person name="Wool I.G."/>
        </authorList>
    </citation>
    <scope>NUCLEOTIDE SEQUENCE [MRNA]</scope>
    <source>
        <strain>Sprague-Dawley</strain>
        <tissue>Liver</tissue>
    </source>
</reference>
<reference key="2">
    <citation type="journal article" date="2004" name="Genome Res.">
        <title>The status, quality, and expansion of the NIH full-length cDNA project: the Mammalian Gene Collection (MGC).</title>
        <authorList>
            <consortium name="The MGC Project Team"/>
        </authorList>
    </citation>
    <scope>NUCLEOTIDE SEQUENCE [LARGE SCALE MRNA]</scope>
    <source>
        <tissue>Pituitary</tissue>
    </source>
</reference>
<reference key="3">
    <citation type="journal article" date="1979" name="J. Supramol. Struct.">
        <title>Sequence of the amino-terminal region of rat liver ribosomal proteins S4, S6, S8, L6, L7a, L18, L27, L30, L37, L37a, and L39.</title>
        <authorList>
            <person name="Wittmann-Liebold B."/>
            <person name="Geissler A.W."/>
            <person name="Lin A."/>
            <person name="Wool I.G."/>
        </authorList>
    </citation>
    <scope>PROTEIN SEQUENCE OF N-TERMINUS</scope>
</reference>
<reference key="4">
    <citation type="journal article" date="1990" name="J. Biol. Chem.">
        <title>Hormonally inducible phosphorylation of a nuclear pool of ribosomal protein S6.</title>
        <authorList>
            <person name="Franco R."/>
            <person name="Rosenfeld M.G."/>
        </authorList>
    </citation>
    <scope>PHOSPHORYLATION</scope>
    <scope>PROTEIN SEQUENCE OF 1-23</scope>
</reference>
<reference key="5">
    <citation type="journal article" date="2012" name="Nat. Commun.">
        <title>Quantitative maps of protein phosphorylation sites across 14 different rat organs and tissues.</title>
        <authorList>
            <person name="Lundby A."/>
            <person name="Secher A."/>
            <person name="Lage K."/>
            <person name="Nordsborg N.B."/>
            <person name="Dmytriyev A."/>
            <person name="Lundby C."/>
            <person name="Olsen J.V."/>
        </authorList>
    </citation>
    <scope>PHOSPHORYLATION [LARGE SCALE ANALYSIS] AT SER-236; SER-240 AND SER-244</scope>
    <scope>IDENTIFICATION BY MASS SPECTROMETRY [LARGE SCALE ANALYSIS]</scope>
</reference>
<accession>P62755</accession>
<accession>P08227</accession>
<accession>P10660</accession>
<protein>
    <recommendedName>
        <fullName evidence="3">Small ribosomal subunit protein eS6</fullName>
    </recommendedName>
    <alternativeName>
        <fullName>40S ribosomal protein S6</fullName>
    </alternativeName>
</protein>
<name>RS6_RAT</name>
<proteinExistence type="evidence at protein level"/>
<keyword id="KW-0002">3D-structure</keyword>
<keyword id="KW-0007">Acetylation</keyword>
<keyword id="KW-0013">ADP-ribosylation</keyword>
<keyword id="KW-0963">Cytoplasm</keyword>
<keyword id="KW-0903">Direct protein sequencing</keyword>
<keyword id="KW-0379">Hydroxylation</keyword>
<keyword id="KW-1017">Isopeptide bond</keyword>
<keyword id="KW-0539">Nucleus</keyword>
<keyword id="KW-0597">Phosphoprotein</keyword>
<keyword id="KW-1185">Reference proteome</keyword>
<keyword id="KW-0687">Ribonucleoprotein</keyword>
<keyword id="KW-0689">Ribosomal protein</keyword>
<keyword id="KW-0832">Ubl conjugation</keyword>
<dbReference type="EMBL" id="M29358">
    <property type="protein sequence ID" value="AAA42079.1"/>
    <property type="molecule type" value="mRNA"/>
</dbReference>
<dbReference type="EMBL" id="BC058149">
    <property type="protein sequence ID" value="AAH58149.1"/>
    <property type="molecule type" value="mRNA"/>
</dbReference>
<dbReference type="PIR" id="A29929">
    <property type="entry name" value="R3RTS6"/>
</dbReference>
<dbReference type="RefSeq" id="NP_058856.1">
    <property type="nucleotide sequence ID" value="NM_017160.1"/>
</dbReference>
<dbReference type="RefSeq" id="XP_003750019.1">
    <property type="nucleotide sequence ID" value="XM_003749971.3"/>
</dbReference>
<dbReference type="PDB" id="7QGG">
    <property type="method" value="EM"/>
    <property type="resolution" value="2.86 A"/>
    <property type="chains" value="SG=1-249"/>
</dbReference>
<dbReference type="PDBsum" id="7QGG"/>
<dbReference type="EMDB" id="EMD-13954"/>
<dbReference type="SMR" id="P62755"/>
<dbReference type="BioGRID" id="247970">
    <property type="interactions" value="6"/>
</dbReference>
<dbReference type="FunCoup" id="P62755">
    <property type="interactions" value="2852"/>
</dbReference>
<dbReference type="IntAct" id="P62755">
    <property type="interactions" value="7"/>
</dbReference>
<dbReference type="MINT" id="P62755"/>
<dbReference type="STRING" id="10116.ENSRNOP00000010383"/>
<dbReference type="GlyGen" id="P62755">
    <property type="glycosylation" value="1 site"/>
</dbReference>
<dbReference type="iPTMnet" id="P62755"/>
<dbReference type="PhosphoSitePlus" id="P62755"/>
<dbReference type="jPOST" id="P62755"/>
<dbReference type="PaxDb" id="10116-ENSRNOP00000010383"/>
<dbReference type="Ensembl" id="ENSRNOT00000073270.3">
    <property type="protein sequence ID" value="ENSRNOP00000067572.2"/>
    <property type="gene ID" value="ENSRNOG00000007663.8"/>
</dbReference>
<dbReference type="GeneID" id="29304"/>
<dbReference type="KEGG" id="rno:29304"/>
<dbReference type="UCSC" id="RGD:3602">
    <property type="organism name" value="rat"/>
</dbReference>
<dbReference type="AGR" id="RGD:3602"/>
<dbReference type="CTD" id="6194"/>
<dbReference type="RGD" id="3602">
    <property type="gene designation" value="Rps6"/>
</dbReference>
<dbReference type="eggNOG" id="KOG1646">
    <property type="taxonomic scope" value="Eukaryota"/>
</dbReference>
<dbReference type="GeneTree" id="ENSGT00390000009819"/>
<dbReference type="HOGENOM" id="CLU_046346_0_1_1"/>
<dbReference type="InParanoid" id="P62755"/>
<dbReference type="OMA" id="KPRYKAP"/>
<dbReference type="OrthoDB" id="10260596at2759"/>
<dbReference type="PhylomeDB" id="P62755"/>
<dbReference type="TreeFam" id="TF300035"/>
<dbReference type="Reactome" id="R-RNO-156827">
    <property type="pathway name" value="L13a-mediated translational silencing of Ceruloplasmin expression"/>
</dbReference>
<dbReference type="Reactome" id="R-RNO-166208">
    <property type="pathway name" value="mTORC1-mediated signalling"/>
</dbReference>
<dbReference type="Reactome" id="R-RNO-1799339">
    <property type="pathway name" value="SRP-dependent cotranslational protein targeting to membrane"/>
</dbReference>
<dbReference type="Reactome" id="R-RNO-6791226">
    <property type="pathway name" value="Major pathway of rRNA processing in the nucleolus and cytosol"/>
</dbReference>
<dbReference type="Reactome" id="R-RNO-72649">
    <property type="pathway name" value="Translation initiation complex formation"/>
</dbReference>
<dbReference type="Reactome" id="R-RNO-72689">
    <property type="pathway name" value="Formation of a pool of free 40S subunits"/>
</dbReference>
<dbReference type="Reactome" id="R-RNO-72695">
    <property type="pathway name" value="Formation of the ternary complex, and subsequently, the 43S complex"/>
</dbReference>
<dbReference type="Reactome" id="R-RNO-72702">
    <property type="pathway name" value="Ribosomal scanning and start codon recognition"/>
</dbReference>
<dbReference type="Reactome" id="R-RNO-72706">
    <property type="pathway name" value="GTP hydrolysis and joining of the 60S ribosomal subunit"/>
</dbReference>
<dbReference type="Reactome" id="R-RNO-9629569">
    <property type="pathway name" value="Protein hydroxylation"/>
</dbReference>
<dbReference type="Reactome" id="R-RNO-975956">
    <property type="pathway name" value="Nonsense Mediated Decay (NMD) independent of the Exon Junction Complex (EJC)"/>
</dbReference>
<dbReference type="Reactome" id="R-RNO-975957">
    <property type="pathway name" value="Nonsense Mediated Decay (NMD) enhanced by the Exon Junction Complex (EJC)"/>
</dbReference>
<dbReference type="CD-CODE" id="34881ED2">
    <property type="entry name" value="Nucleolus"/>
</dbReference>
<dbReference type="PRO" id="PR:P62755"/>
<dbReference type="Proteomes" id="UP000002494">
    <property type="component" value="Chromosome 5"/>
</dbReference>
<dbReference type="GO" id="GO:0044297">
    <property type="term" value="C:cell body"/>
    <property type="evidence" value="ECO:0000266"/>
    <property type="project" value="RGD"/>
</dbReference>
<dbReference type="GO" id="GO:0005737">
    <property type="term" value="C:cytoplasm"/>
    <property type="evidence" value="ECO:0000266"/>
    <property type="project" value="RGD"/>
</dbReference>
<dbReference type="GO" id="GO:0036464">
    <property type="term" value="C:cytoplasmic ribonucleoprotein granule"/>
    <property type="evidence" value="ECO:0000266"/>
    <property type="project" value="RGD"/>
</dbReference>
<dbReference type="GO" id="GO:0022626">
    <property type="term" value="C:cytosolic ribosome"/>
    <property type="evidence" value="ECO:0000266"/>
    <property type="project" value="RGD"/>
</dbReference>
<dbReference type="GO" id="GO:0022627">
    <property type="term" value="C:cytosolic small ribosomal subunit"/>
    <property type="evidence" value="ECO:0000314"/>
    <property type="project" value="RGD"/>
</dbReference>
<dbReference type="GO" id="GO:0030425">
    <property type="term" value="C:dendrite"/>
    <property type="evidence" value="ECO:0000266"/>
    <property type="project" value="RGD"/>
</dbReference>
<dbReference type="GO" id="GO:0005783">
    <property type="term" value="C:endoplasmic reticulum"/>
    <property type="evidence" value="ECO:0007669"/>
    <property type="project" value="Ensembl"/>
</dbReference>
<dbReference type="GO" id="GO:0098982">
    <property type="term" value="C:GABA-ergic synapse"/>
    <property type="evidence" value="ECO:0000314"/>
    <property type="project" value="SynGO"/>
</dbReference>
<dbReference type="GO" id="GO:0005730">
    <property type="term" value="C:nucleolus"/>
    <property type="evidence" value="ECO:0000266"/>
    <property type="project" value="RGD"/>
</dbReference>
<dbReference type="GO" id="GO:0005634">
    <property type="term" value="C:nucleus"/>
    <property type="evidence" value="ECO:0000266"/>
    <property type="project" value="RGD"/>
</dbReference>
<dbReference type="GO" id="GO:0048471">
    <property type="term" value="C:perinuclear region of cytoplasm"/>
    <property type="evidence" value="ECO:0000266"/>
    <property type="project" value="RGD"/>
</dbReference>
<dbReference type="GO" id="GO:0098794">
    <property type="term" value="C:postsynapse"/>
    <property type="evidence" value="ECO:0000303"/>
    <property type="project" value="SynGO"/>
</dbReference>
<dbReference type="GO" id="GO:0098793">
    <property type="term" value="C:presynapse"/>
    <property type="evidence" value="ECO:0000314"/>
    <property type="project" value="SynGO"/>
</dbReference>
<dbReference type="GO" id="GO:1990904">
    <property type="term" value="C:ribonucleoprotein complex"/>
    <property type="evidence" value="ECO:0000266"/>
    <property type="project" value="RGD"/>
</dbReference>
<dbReference type="GO" id="GO:0005840">
    <property type="term" value="C:ribosome"/>
    <property type="evidence" value="ECO:0000314"/>
    <property type="project" value="SynGO"/>
</dbReference>
<dbReference type="GO" id="GO:0015935">
    <property type="term" value="C:small ribosomal subunit"/>
    <property type="evidence" value="ECO:0000266"/>
    <property type="project" value="RGD"/>
</dbReference>
<dbReference type="GO" id="GO:0032040">
    <property type="term" value="C:small-subunit processome"/>
    <property type="evidence" value="ECO:0000250"/>
    <property type="project" value="UniProtKB"/>
</dbReference>
<dbReference type="GO" id="GO:0003729">
    <property type="term" value="F:mRNA binding"/>
    <property type="evidence" value="ECO:0000314"/>
    <property type="project" value="RGD"/>
</dbReference>
<dbReference type="GO" id="GO:0019901">
    <property type="term" value="F:protein kinase binding"/>
    <property type="evidence" value="ECO:0000266"/>
    <property type="project" value="RGD"/>
</dbReference>
<dbReference type="GO" id="GO:0003735">
    <property type="term" value="F:structural constituent of ribosome"/>
    <property type="evidence" value="ECO:0000315"/>
    <property type="project" value="RGD"/>
</dbReference>
<dbReference type="GO" id="GO:0006924">
    <property type="term" value="P:activation-induced cell death of T cells"/>
    <property type="evidence" value="ECO:0000266"/>
    <property type="project" value="RGD"/>
</dbReference>
<dbReference type="GO" id="GO:0071361">
    <property type="term" value="P:cellular response to ethanol"/>
    <property type="evidence" value="ECO:0000314"/>
    <property type="project" value="RGD"/>
</dbReference>
<dbReference type="GO" id="GO:0002181">
    <property type="term" value="P:cytoplasmic translation"/>
    <property type="evidence" value="ECO:0000250"/>
    <property type="project" value="UniProtKB"/>
</dbReference>
<dbReference type="GO" id="GO:0048821">
    <property type="term" value="P:erythrocyte development"/>
    <property type="evidence" value="ECO:0000266"/>
    <property type="project" value="RGD"/>
</dbReference>
<dbReference type="GO" id="GO:0000082">
    <property type="term" value="P:G1/S transition of mitotic cell cycle"/>
    <property type="evidence" value="ECO:0000266"/>
    <property type="project" value="RGD"/>
</dbReference>
<dbReference type="GO" id="GO:0007369">
    <property type="term" value="P:gastrulation"/>
    <property type="evidence" value="ECO:0000266"/>
    <property type="project" value="RGD"/>
</dbReference>
<dbReference type="GO" id="GO:0042593">
    <property type="term" value="P:glucose homeostasis"/>
    <property type="evidence" value="ECO:0000250"/>
    <property type="project" value="UniProtKB"/>
</dbReference>
<dbReference type="GO" id="GO:0022605">
    <property type="term" value="P:mammalian oogenesis stage"/>
    <property type="evidence" value="ECO:0000266"/>
    <property type="project" value="RGD"/>
</dbReference>
<dbReference type="GO" id="GO:0000278">
    <property type="term" value="P:mitotic cell cycle"/>
    <property type="evidence" value="ECO:0000266"/>
    <property type="project" value="RGD"/>
</dbReference>
<dbReference type="GO" id="GO:0043066">
    <property type="term" value="P:negative regulation of apoptotic process"/>
    <property type="evidence" value="ECO:0000266"/>
    <property type="project" value="RGD"/>
</dbReference>
<dbReference type="GO" id="GO:1903347">
    <property type="term" value="P:negative regulation of bicellular tight junction assembly"/>
    <property type="evidence" value="ECO:0000314"/>
    <property type="project" value="RGD"/>
</dbReference>
<dbReference type="GO" id="GO:0001890">
    <property type="term" value="P:placenta development"/>
    <property type="evidence" value="ECO:0000266"/>
    <property type="project" value="RGD"/>
</dbReference>
<dbReference type="GO" id="GO:0043065">
    <property type="term" value="P:positive regulation of apoptotic process"/>
    <property type="evidence" value="ECO:0000266"/>
    <property type="project" value="RGD"/>
</dbReference>
<dbReference type="GO" id="GO:0008284">
    <property type="term" value="P:positive regulation of cell population proliferation"/>
    <property type="evidence" value="ECO:0000250"/>
    <property type="project" value="UniProtKB"/>
</dbReference>
<dbReference type="GO" id="GO:0032868">
    <property type="term" value="P:response to insulin"/>
    <property type="evidence" value="ECO:0000314"/>
    <property type="project" value="RGD"/>
</dbReference>
<dbReference type="GO" id="GO:0000028">
    <property type="term" value="P:ribosomal small subunit assembly"/>
    <property type="evidence" value="ECO:0000315"/>
    <property type="project" value="RGD"/>
</dbReference>
<dbReference type="GO" id="GO:0042274">
    <property type="term" value="P:ribosomal small subunit biogenesis"/>
    <property type="evidence" value="ECO:0000250"/>
    <property type="project" value="UniProtKB"/>
</dbReference>
<dbReference type="GO" id="GO:0006364">
    <property type="term" value="P:rRNA processing"/>
    <property type="evidence" value="ECO:0000266"/>
    <property type="project" value="RGD"/>
</dbReference>
<dbReference type="GO" id="GO:0033077">
    <property type="term" value="P:T cell differentiation in thymus"/>
    <property type="evidence" value="ECO:0000266"/>
    <property type="project" value="RGD"/>
</dbReference>
<dbReference type="GO" id="GO:0002309">
    <property type="term" value="P:T cell proliferation involved in immune response"/>
    <property type="evidence" value="ECO:0000266"/>
    <property type="project" value="RGD"/>
</dbReference>
<dbReference type="GO" id="GO:0031929">
    <property type="term" value="P:TOR signaling"/>
    <property type="evidence" value="ECO:0000266"/>
    <property type="project" value="RGD"/>
</dbReference>
<dbReference type="FunFam" id="1.20.5.2650:FF:000001">
    <property type="entry name" value="40S ribosomal protein S6"/>
    <property type="match status" value="1"/>
</dbReference>
<dbReference type="Gene3D" id="1.20.5.2650">
    <property type="match status" value="1"/>
</dbReference>
<dbReference type="InterPro" id="IPR001377">
    <property type="entry name" value="Ribosomal_eS6"/>
</dbReference>
<dbReference type="InterPro" id="IPR014401">
    <property type="entry name" value="Ribosomal_eS6-like"/>
</dbReference>
<dbReference type="InterPro" id="IPR018282">
    <property type="entry name" value="Ribosomal_eS6_CS"/>
</dbReference>
<dbReference type="PANTHER" id="PTHR11502">
    <property type="entry name" value="40S RIBOSOMAL PROTEIN S6"/>
    <property type="match status" value="1"/>
</dbReference>
<dbReference type="Pfam" id="PF01092">
    <property type="entry name" value="Ribosomal_S6e"/>
    <property type="match status" value="1"/>
</dbReference>
<dbReference type="PIRSF" id="PIRSF002129">
    <property type="entry name" value="Ribosom_S6_euk"/>
    <property type="match status" value="1"/>
</dbReference>
<dbReference type="SMART" id="SM01405">
    <property type="entry name" value="Ribosomal_S6e"/>
    <property type="match status" value="1"/>
</dbReference>
<dbReference type="PROSITE" id="PS00578">
    <property type="entry name" value="RIBOSOMAL_S6E"/>
    <property type="match status" value="1"/>
</dbReference>
<organism>
    <name type="scientific">Rattus norvegicus</name>
    <name type="common">Rat</name>
    <dbReference type="NCBI Taxonomy" id="10116"/>
    <lineage>
        <taxon>Eukaryota</taxon>
        <taxon>Metazoa</taxon>
        <taxon>Chordata</taxon>
        <taxon>Craniata</taxon>
        <taxon>Vertebrata</taxon>
        <taxon>Euteleostomi</taxon>
        <taxon>Mammalia</taxon>
        <taxon>Eutheria</taxon>
        <taxon>Euarchontoglires</taxon>
        <taxon>Glires</taxon>
        <taxon>Rodentia</taxon>
        <taxon>Myomorpha</taxon>
        <taxon>Muroidea</taxon>
        <taxon>Muridae</taxon>
        <taxon>Murinae</taxon>
        <taxon>Rattus</taxon>
    </lineage>
</organism>
<evidence type="ECO:0000250" key="1">
    <source>
        <dbReference type="UniProtKB" id="P62753"/>
    </source>
</evidence>
<evidence type="ECO:0000256" key="2">
    <source>
        <dbReference type="SAM" id="MobiDB-lite"/>
    </source>
</evidence>
<evidence type="ECO:0000305" key="3"/>
<evidence type="ECO:0007744" key="4">
    <source>
    </source>
</evidence>
<gene>
    <name type="primary">Rps6</name>
</gene>
<feature type="chain" id="PRO_0000137314" description="Small ribosomal subunit protein eS6">
    <location>
        <begin position="1"/>
        <end position="249"/>
    </location>
</feature>
<feature type="region of interest" description="Disordered" evidence="2">
    <location>
        <begin position="217"/>
        <end position="249"/>
    </location>
</feature>
<feature type="compositionally biased region" description="Basic and acidic residues" evidence="2">
    <location>
        <begin position="217"/>
        <end position="229"/>
    </location>
</feature>
<feature type="compositionally biased region" description="Low complexity" evidence="2">
    <location>
        <begin position="236"/>
        <end position="249"/>
    </location>
</feature>
<feature type="modified residue" description="ADP-ribosyl glutamic acid" evidence="1">
    <location>
        <position position="35"/>
    </location>
</feature>
<feature type="modified residue" description="(3R)-3-hydroxyarginine" evidence="1">
    <location>
        <position position="137"/>
    </location>
</feature>
<feature type="modified residue" description="Phosphoserine" evidence="1">
    <location>
        <position position="148"/>
    </location>
</feature>
<feature type="modified residue" description="N6-acetyllysine" evidence="1">
    <location>
        <position position="211"/>
    </location>
</feature>
<feature type="modified residue" description="Phosphoserine; by RPS6KA1, RPS6KA3, DAPK1 and PASK" evidence="1">
    <location>
        <position position="235"/>
    </location>
</feature>
<feature type="modified residue" description="Phosphoserine" evidence="4">
    <location>
        <position position="236"/>
    </location>
</feature>
<feature type="modified residue" description="Phosphoserine" evidence="4">
    <location>
        <position position="240"/>
    </location>
</feature>
<feature type="modified residue" description="Phosphoserine" evidence="1">
    <location>
        <position position="242"/>
    </location>
</feature>
<feature type="modified residue" description="Phosphoserine" evidence="4">
    <location>
        <position position="244"/>
    </location>
</feature>
<feature type="modified residue" description="Phosphoserine" evidence="1">
    <location>
        <position position="247"/>
    </location>
</feature>
<feature type="cross-link" description="Glycyl lysine isopeptide (Lys-Gly) (interchain with G-Cter in SUMO2)" evidence="1">
    <location>
        <position position="14"/>
    </location>
</feature>